<proteinExistence type="inferred from homology"/>
<evidence type="ECO:0000255" key="1">
    <source>
        <dbReference type="HAMAP-Rule" id="MF_00267"/>
    </source>
</evidence>
<accession>B5ZAG0</accession>
<sequence length="195" mass="22491">MLKTNQKNVHAFEIEKQEPEAVMEFLEKNHALLQYFLIIFKYDIEPEVKAILRKHQLLFLETNRALNGRHIKTMSLKEETDHPKPNHSKTEPKTTIYERHIRSGEEIYSANHLIFLGNIHNGAKIISEGCVSVYGVCEGAIVCFGECLILKEVKSAQIVFQNQILSLKEVERLLVNKNIKIITKNDDILDIKEVL</sequence>
<comment type="function">
    <text evidence="1">Cell division inhibitor that blocks the formation of polar Z ring septums. Rapidly oscillates between the poles of the cell to destabilize FtsZ filaments that have formed before they mature into polar Z rings. Prevents FtsZ polymerization.</text>
</comment>
<comment type="subunit">
    <text evidence="1">Interacts with MinD and FtsZ.</text>
</comment>
<comment type="similarity">
    <text evidence="1">Belongs to the MinC family.</text>
</comment>
<keyword id="KW-0131">Cell cycle</keyword>
<keyword id="KW-0132">Cell division</keyword>
<keyword id="KW-1185">Reference proteome</keyword>
<keyword id="KW-0717">Septation</keyword>
<gene>
    <name evidence="1" type="primary">minC</name>
    <name type="ordered locus">HPG27_375</name>
</gene>
<organism>
    <name type="scientific">Helicobacter pylori (strain G27)</name>
    <dbReference type="NCBI Taxonomy" id="563041"/>
    <lineage>
        <taxon>Bacteria</taxon>
        <taxon>Pseudomonadati</taxon>
        <taxon>Campylobacterota</taxon>
        <taxon>Epsilonproteobacteria</taxon>
        <taxon>Campylobacterales</taxon>
        <taxon>Helicobacteraceae</taxon>
        <taxon>Helicobacter</taxon>
    </lineage>
</organism>
<protein>
    <recommendedName>
        <fullName evidence="1">Probable septum site-determining protein MinC</fullName>
    </recommendedName>
</protein>
<dbReference type="EMBL" id="CP001173">
    <property type="protein sequence ID" value="ACI27140.1"/>
    <property type="molecule type" value="Genomic_DNA"/>
</dbReference>
<dbReference type="RefSeq" id="WP_000921078.1">
    <property type="nucleotide sequence ID" value="NC_011333.1"/>
</dbReference>
<dbReference type="SMR" id="B5ZAG0"/>
<dbReference type="KEGG" id="hpg:HPG27_375"/>
<dbReference type="HOGENOM" id="CLU_114483_0_0_7"/>
<dbReference type="Proteomes" id="UP000001735">
    <property type="component" value="Chromosome"/>
</dbReference>
<dbReference type="GO" id="GO:0000902">
    <property type="term" value="P:cell morphogenesis"/>
    <property type="evidence" value="ECO:0007669"/>
    <property type="project" value="InterPro"/>
</dbReference>
<dbReference type="GO" id="GO:0000917">
    <property type="term" value="P:division septum assembly"/>
    <property type="evidence" value="ECO:0007669"/>
    <property type="project" value="UniProtKB-KW"/>
</dbReference>
<dbReference type="GO" id="GO:1901891">
    <property type="term" value="P:regulation of cell septum assembly"/>
    <property type="evidence" value="ECO:0007669"/>
    <property type="project" value="InterPro"/>
</dbReference>
<dbReference type="Gene3D" id="2.160.20.70">
    <property type="match status" value="1"/>
</dbReference>
<dbReference type="HAMAP" id="MF_00267">
    <property type="entry name" value="MinC"/>
    <property type="match status" value="1"/>
</dbReference>
<dbReference type="InterPro" id="IPR016098">
    <property type="entry name" value="CAP/MinC_C"/>
</dbReference>
<dbReference type="InterPro" id="IPR013033">
    <property type="entry name" value="MinC"/>
</dbReference>
<dbReference type="InterPro" id="IPR036145">
    <property type="entry name" value="MinC_C_sf"/>
</dbReference>
<dbReference type="InterPro" id="IPR005526">
    <property type="entry name" value="Septum_form_inhib_MinC_C"/>
</dbReference>
<dbReference type="NCBIfam" id="NF001818">
    <property type="entry name" value="PRK00556.1-2"/>
    <property type="match status" value="1"/>
</dbReference>
<dbReference type="PANTHER" id="PTHR34108">
    <property type="entry name" value="SEPTUM SITE-DETERMINING PROTEIN MINC"/>
    <property type="match status" value="1"/>
</dbReference>
<dbReference type="PANTHER" id="PTHR34108:SF1">
    <property type="entry name" value="SEPTUM SITE-DETERMINING PROTEIN MINC"/>
    <property type="match status" value="1"/>
</dbReference>
<dbReference type="Pfam" id="PF03775">
    <property type="entry name" value="MinC_C"/>
    <property type="match status" value="1"/>
</dbReference>
<dbReference type="SUPFAM" id="SSF63848">
    <property type="entry name" value="Cell-division inhibitor MinC, C-terminal domain"/>
    <property type="match status" value="1"/>
</dbReference>
<reference key="1">
    <citation type="journal article" date="2009" name="J. Bacteriol.">
        <title>The complete genome sequence of Helicobacter pylori strain G27.</title>
        <authorList>
            <person name="Baltrus D.A."/>
            <person name="Amieva M.R."/>
            <person name="Covacci A."/>
            <person name="Lowe T.M."/>
            <person name="Merrell D.S."/>
            <person name="Ottemann K.M."/>
            <person name="Stein M."/>
            <person name="Salama N.R."/>
            <person name="Guillemin K."/>
        </authorList>
    </citation>
    <scope>NUCLEOTIDE SEQUENCE [LARGE SCALE GENOMIC DNA]</scope>
    <source>
        <strain>G27</strain>
    </source>
</reference>
<name>MINC_HELPG</name>
<feature type="chain" id="PRO_1000114283" description="Probable septum site-determining protein MinC">
    <location>
        <begin position="1"/>
        <end position="195"/>
    </location>
</feature>